<accession>P63908</accession>
<accession>A0A1R3Y3S4</accession>
<accession>O53365</accession>
<accession>X2BN49</accession>
<comment type="function">
    <text evidence="1">Catalyzes the hydrolytic deamination of adenosine and 2-deoxyadenosine.</text>
</comment>
<comment type="catalytic activity">
    <reaction evidence="1">
        <text>adenosine + H2O + H(+) = inosine + NH4(+)</text>
        <dbReference type="Rhea" id="RHEA:24408"/>
        <dbReference type="ChEBI" id="CHEBI:15377"/>
        <dbReference type="ChEBI" id="CHEBI:15378"/>
        <dbReference type="ChEBI" id="CHEBI:16335"/>
        <dbReference type="ChEBI" id="CHEBI:17596"/>
        <dbReference type="ChEBI" id="CHEBI:28938"/>
        <dbReference type="EC" id="3.5.4.4"/>
    </reaction>
    <physiologicalReaction direction="left-to-right" evidence="1">
        <dbReference type="Rhea" id="RHEA:24409"/>
    </physiologicalReaction>
</comment>
<comment type="catalytic activity">
    <reaction evidence="1">
        <text>2'-deoxyadenosine + H2O + H(+) = 2'-deoxyinosine + NH4(+)</text>
        <dbReference type="Rhea" id="RHEA:28190"/>
        <dbReference type="ChEBI" id="CHEBI:15377"/>
        <dbReference type="ChEBI" id="CHEBI:15378"/>
        <dbReference type="ChEBI" id="CHEBI:17256"/>
        <dbReference type="ChEBI" id="CHEBI:28938"/>
        <dbReference type="ChEBI" id="CHEBI:28997"/>
        <dbReference type="EC" id="3.5.4.4"/>
    </reaction>
    <physiologicalReaction direction="left-to-right" evidence="1">
        <dbReference type="Rhea" id="RHEA:28191"/>
    </physiologicalReaction>
</comment>
<comment type="cofactor">
    <cofactor evidence="1">
        <name>Zn(2+)</name>
        <dbReference type="ChEBI" id="CHEBI:29105"/>
    </cofactor>
    <text evidence="1">Binds 1 zinc ion per subunit.</text>
</comment>
<comment type="similarity">
    <text evidence="1">Belongs to the metallo-dependent hydrolases superfamily. Adenosine and AMP deaminases family. Adenosine deaminase subfamily.</text>
</comment>
<dbReference type="EC" id="3.5.4.4" evidence="1"/>
<dbReference type="EMBL" id="LT708304">
    <property type="protein sequence ID" value="SIU01971.1"/>
    <property type="molecule type" value="Genomic_DNA"/>
</dbReference>
<dbReference type="RefSeq" id="NP_856987.1">
    <property type="nucleotide sequence ID" value="NC_002945.3"/>
</dbReference>
<dbReference type="RefSeq" id="WP_003417259.1">
    <property type="nucleotide sequence ID" value="NC_002945.4"/>
</dbReference>
<dbReference type="SMR" id="P63908"/>
<dbReference type="KEGG" id="mbo:BQ2027_MB3342C"/>
<dbReference type="PATRIC" id="fig|233413.5.peg.3673"/>
<dbReference type="Proteomes" id="UP000001419">
    <property type="component" value="Chromosome"/>
</dbReference>
<dbReference type="GO" id="GO:0005829">
    <property type="term" value="C:cytosol"/>
    <property type="evidence" value="ECO:0007669"/>
    <property type="project" value="TreeGrafter"/>
</dbReference>
<dbReference type="GO" id="GO:0046936">
    <property type="term" value="F:2'-deoxyadenosine deaminase activity"/>
    <property type="evidence" value="ECO:0007669"/>
    <property type="project" value="RHEA"/>
</dbReference>
<dbReference type="GO" id="GO:0004000">
    <property type="term" value="F:adenosine deaminase activity"/>
    <property type="evidence" value="ECO:0007669"/>
    <property type="project" value="UniProtKB-UniRule"/>
</dbReference>
<dbReference type="GO" id="GO:0008270">
    <property type="term" value="F:zinc ion binding"/>
    <property type="evidence" value="ECO:0007669"/>
    <property type="project" value="UniProtKB-UniRule"/>
</dbReference>
<dbReference type="GO" id="GO:0006154">
    <property type="term" value="P:adenosine catabolic process"/>
    <property type="evidence" value="ECO:0007669"/>
    <property type="project" value="TreeGrafter"/>
</dbReference>
<dbReference type="GO" id="GO:0043103">
    <property type="term" value="P:hypoxanthine salvage"/>
    <property type="evidence" value="ECO:0007669"/>
    <property type="project" value="TreeGrafter"/>
</dbReference>
<dbReference type="GO" id="GO:0046103">
    <property type="term" value="P:inosine biosynthetic process"/>
    <property type="evidence" value="ECO:0007669"/>
    <property type="project" value="TreeGrafter"/>
</dbReference>
<dbReference type="GO" id="GO:0009117">
    <property type="term" value="P:nucleotide metabolic process"/>
    <property type="evidence" value="ECO:0007669"/>
    <property type="project" value="UniProtKB-KW"/>
</dbReference>
<dbReference type="GO" id="GO:0009168">
    <property type="term" value="P:purine ribonucleoside monophosphate biosynthetic process"/>
    <property type="evidence" value="ECO:0007669"/>
    <property type="project" value="UniProtKB-UniRule"/>
</dbReference>
<dbReference type="FunFam" id="3.20.20.140:FF:000020">
    <property type="entry name" value="Adenosine deaminase"/>
    <property type="match status" value="1"/>
</dbReference>
<dbReference type="Gene3D" id="3.20.20.140">
    <property type="entry name" value="Metal-dependent hydrolases"/>
    <property type="match status" value="1"/>
</dbReference>
<dbReference type="HAMAP" id="MF_00540">
    <property type="entry name" value="A_deaminase"/>
    <property type="match status" value="1"/>
</dbReference>
<dbReference type="InterPro" id="IPR028893">
    <property type="entry name" value="A_deaminase"/>
</dbReference>
<dbReference type="InterPro" id="IPR001365">
    <property type="entry name" value="A_deaminase_dom"/>
</dbReference>
<dbReference type="InterPro" id="IPR006330">
    <property type="entry name" value="Ado/ade_deaminase"/>
</dbReference>
<dbReference type="InterPro" id="IPR032466">
    <property type="entry name" value="Metal_Hydrolase"/>
</dbReference>
<dbReference type="NCBIfam" id="TIGR01430">
    <property type="entry name" value="aden_deam"/>
    <property type="match status" value="1"/>
</dbReference>
<dbReference type="NCBIfam" id="NF006847">
    <property type="entry name" value="PRK09358.1-2"/>
    <property type="match status" value="1"/>
</dbReference>
<dbReference type="PANTHER" id="PTHR11409">
    <property type="entry name" value="ADENOSINE DEAMINASE"/>
    <property type="match status" value="1"/>
</dbReference>
<dbReference type="PANTHER" id="PTHR11409:SF43">
    <property type="entry name" value="ADENOSINE DEAMINASE"/>
    <property type="match status" value="1"/>
</dbReference>
<dbReference type="Pfam" id="PF00962">
    <property type="entry name" value="A_deaminase"/>
    <property type="match status" value="1"/>
</dbReference>
<dbReference type="SUPFAM" id="SSF51556">
    <property type="entry name" value="Metallo-dependent hydrolases"/>
    <property type="match status" value="1"/>
</dbReference>
<organism>
    <name type="scientific">Mycobacterium bovis (strain ATCC BAA-935 / AF2122/97)</name>
    <dbReference type="NCBI Taxonomy" id="233413"/>
    <lineage>
        <taxon>Bacteria</taxon>
        <taxon>Bacillati</taxon>
        <taxon>Actinomycetota</taxon>
        <taxon>Actinomycetes</taxon>
        <taxon>Mycobacteriales</taxon>
        <taxon>Mycobacteriaceae</taxon>
        <taxon>Mycobacterium</taxon>
        <taxon>Mycobacterium tuberculosis complex</taxon>
    </lineage>
</organism>
<proteinExistence type="inferred from homology"/>
<evidence type="ECO:0000255" key="1">
    <source>
        <dbReference type="HAMAP-Rule" id="MF_00540"/>
    </source>
</evidence>
<protein>
    <recommendedName>
        <fullName evidence="1">Adenosine deaminase</fullName>
        <ecNumber evidence="1">3.5.4.4</ecNumber>
    </recommendedName>
    <alternativeName>
        <fullName evidence="1">Adenosine aminohydrolase</fullName>
    </alternativeName>
</protein>
<feature type="chain" id="PRO_0000194375" description="Adenosine deaminase">
    <location>
        <begin position="1"/>
        <end position="365"/>
    </location>
</feature>
<feature type="active site" description="Proton donor" evidence="1">
    <location>
        <position position="211"/>
    </location>
</feature>
<feature type="binding site" evidence="1">
    <location>
        <position position="19"/>
    </location>
    <ligand>
        <name>Zn(2+)</name>
        <dbReference type="ChEBI" id="CHEBI:29105"/>
        <note>catalytic</note>
    </ligand>
</feature>
<feature type="binding site" evidence="1">
    <location>
        <position position="21"/>
    </location>
    <ligand>
        <name>substrate</name>
    </ligand>
</feature>
<feature type="binding site" evidence="1">
    <location>
        <position position="21"/>
    </location>
    <ligand>
        <name>Zn(2+)</name>
        <dbReference type="ChEBI" id="CHEBI:29105"/>
        <note>catalytic</note>
    </ligand>
</feature>
<feature type="binding site" evidence="1">
    <location>
        <position position="23"/>
    </location>
    <ligand>
        <name>substrate</name>
    </ligand>
</feature>
<feature type="binding site" evidence="1">
    <location>
        <position position="181"/>
    </location>
    <ligand>
        <name>substrate</name>
    </ligand>
</feature>
<feature type="binding site" evidence="1">
    <location>
        <position position="208"/>
    </location>
    <ligand>
        <name>Zn(2+)</name>
        <dbReference type="ChEBI" id="CHEBI:29105"/>
        <note>catalytic</note>
    </ligand>
</feature>
<feature type="binding site" evidence="1">
    <location>
        <position position="300"/>
    </location>
    <ligand>
        <name>Zn(2+)</name>
        <dbReference type="ChEBI" id="CHEBI:29105"/>
        <note>catalytic</note>
    </ligand>
</feature>
<feature type="site" description="Important for catalytic activity" evidence="1">
    <location>
        <position position="232"/>
    </location>
</feature>
<gene>
    <name evidence="1" type="primary">add</name>
    <name type="ordered locus">BQ2027_MB3342C</name>
</gene>
<reference key="1">
    <citation type="journal article" date="2003" name="Proc. Natl. Acad. Sci. U.S.A.">
        <title>The complete genome sequence of Mycobacterium bovis.</title>
        <authorList>
            <person name="Garnier T."/>
            <person name="Eiglmeier K."/>
            <person name="Camus J.-C."/>
            <person name="Medina N."/>
            <person name="Mansoor H."/>
            <person name="Pryor M."/>
            <person name="Duthoy S."/>
            <person name="Grondin S."/>
            <person name="Lacroix C."/>
            <person name="Monsempe C."/>
            <person name="Simon S."/>
            <person name="Harris B."/>
            <person name="Atkin R."/>
            <person name="Doggett J."/>
            <person name="Mayes R."/>
            <person name="Keating L."/>
            <person name="Wheeler P.R."/>
            <person name="Parkhill J."/>
            <person name="Barrell B.G."/>
            <person name="Cole S.T."/>
            <person name="Gordon S.V."/>
            <person name="Hewinson R.G."/>
        </authorList>
    </citation>
    <scope>NUCLEOTIDE SEQUENCE [LARGE SCALE GENOMIC DNA]</scope>
    <source>
        <strain>ATCC BAA-935 / AF2122/97</strain>
    </source>
</reference>
<reference key="2">
    <citation type="journal article" date="2017" name="Genome Announc.">
        <title>Updated reference genome sequence and annotation of Mycobacterium bovis AF2122/97.</title>
        <authorList>
            <person name="Malone K.M."/>
            <person name="Farrell D."/>
            <person name="Stuber T.P."/>
            <person name="Schubert O.T."/>
            <person name="Aebersold R."/>
            <person name="Robbe-Austerman S."/>
            <person name="Gordon S.V."/>
        </authorList>
    </citation>
    <scope>NUCLEOTIDE SEQUENCE [LARGE SCALE GENOMIC DNA]</scope>
    <scope>GENOME REANNOTATION</scope>
    <source>
        <strain>ATCC BAA-935 / AF2122/97</strain>
    </source>
</reference>
<keyword id="KW-0378">Hydrolase</keyword>
<keyword id="KW-0479">Metal-binding</keyword>
<keyword id="KW-0546">Nucleotide metabolism</keyword>
<keyword id="KW-1185">Reference proteome</keyword>
<keyword id="KW-0862">Zinc</keyword>
<sequence length="365" mass="39743">MTAAPTLQTIRLAPKALLHDHLDGGLRPATVLDIAGQVGYDDLPATDVDALASWFRTQSHSGSLERYLEPFSHTVAVMQTPEALYRVAFECAQDLAADSVVYAEVRFAPELHISCGLSFDDVVDTVLTGFAAGEKACAADGQPITVRCLVTAMRHAAMSREIAELAIRFRDKGVVGFDIAGAEAGHPPTRHLDAFEYMRDHNARFTIHAGEAFGLPSIHEAIAFCGADRLGHGVRIVDDIDVDADGGFQLGRLAAILRDKRIPLELCPSSNVQTGAVASIAEHPFDLLARARFRVTVNTDNRLMSDTSMSLEMHRLVEAFGYGWSDLARFTVNAMKSAFIPFDQRLAIIDEVIKPRFAALMGHSE</sequence>
<name>ADD_MYCBO</name>